<feature type="chain" id="PRO_1000129670" description="Co-chaperonin GroES">
    <location>
        <begin position="1"/>
        <end position="118"/>
    </location>
</feature>
<comment type="function">
    <text evidence="1">Together with the chaperonin GroEL, plays an essential role in assisting protein folding. The GroEL-GroES system forms a nano-cage that allows encapsulation of the non-native substrate proteins and provides a physical environment optimized to promote and accelerate protein folding. GroES binds to the apical surface of the GroEL ring, thereby capping the opening of the GroEL channel.</text>
</comment>
<comment type="subunit">
    <text evidence="1">Heptamer of 7 subunits arranged in a ring. Interacts with the chaperonin GroEL.</text>
</comment>
<comment type="subcellular location">
    <subcellularLocation>
        <location evidence="1">Cytoplasm</location>
    </subcellularLocation>
</comment>
<comment type="similarity">
    <text evidence="1">Belongs to the GroES chaperonin family.</text>
</comment>
<gene>
    <name evidence="1" type="primary">groES</name>
    <name evidence="1" type="synonym">groS</name>
    <name type="ordered locus">HPSH_00055</name>
</gene>
<reference key="1">
    <citation type="submission" date="2008-05" db="EMBL/GenBank/DDBJ databases">
        <title>Genome sequence of Helicobacter pylori from the remote Amazon: traces of Asian ancestry of the first Americans.</title>
        <authorList>
            <person name="Kersulyte D."/>
            <person name="Kalia A."/>
            <person name="Gilman R.H."/>
            <person name="Berg D.E."/>
        </authorList>
    </citation>
    <scope>NUCLEOTIDE SEQUENCE [LARGE SCALE GENOMIC DNA]</scope>
    <source>
        <strain>Shi470</strain>
    </source>
</reference>
<keyword id="KW-0143">Chaperone</keyword>
<keyword id="KW-0963">Cytoplasm</keyword>
<name>CH10_HELPS</name>
<dbReference type="EMBL" id="CP001072">
    <property type="protein sequence ID" value="ACD47478.1"/>
    <property type="molecule type" value="Genomic_DNA"/>
</dbReference>
<dbReference type="RefSeq" id="WP_000671969.1">
    <property type="nucleotide sequence ID" value="NC_010698.2"/>
</dbReference>
<dbReference type="SMR" id="B2UW13"/>
<dbReference type="KEGG" id="hps:HPSH_00055"/>
<dbReference type="HOGENOM" id="CLU_132825_2_0_7"/>
<dbReference type="GO" id="GO:0005737">
    <property type="term" value="C:cytoplasm"/>
    <property type="evidence" value="ECO:0007669"/>
    <property type="project" value="UniProtKB-SubCell"/>
</dbReference>
<dbReference type="GO" id="GO:0005524">
    <property type="term" value="F:ATP binding"/>
    <property type="evidence" value="ECO:0007669"/>
    <property type="project" value="InterPro"/>
</dbReference>
<dbReference type="GO" id="GO:0046872">
    <property type="term" value="F:metal ion binding"/>
    <property type="evidence" value="ECO:0007669"/>
    <property type="project" value="TreeGrafter"/>
</dbReference>
<dbReference type="GO" id="GO:0044183">
    <property type="term" value="F:protein folding chaperone"/>
    <property type="evidence" value="ECO:0007669"/>
    <property type="project" value="InterPro"/>
</dbReference>
<dbReference type="GO" id="GO:0051087">
    <property type="term" value="F:protein-folding chaperone binding"/>
    <property type="evidence" value="ECO:0007669"/>
    <property type="project" value="TreeGrafter"/>
</dbReference>
<dbReference type="GO" id="GO:0051082">
    <property type="term" value="F:unfolded protein binding"/>
    <property type="evidence" value="ECO:0007669"/>
    <property type="project" value="TreeGrafter"/>
</dbReference>
<dbReference type="GO" id="GO:0051085">
    <property type="term" value="P:chaperone cofactor-dependent protein refolding"/>
    <property type="evidence" value="ECO:0007669"/>
    <property type="project" value="TreeGrafter"/>
</dbReference>
<dbReference type="CDD" id="cd00320">
    <property type="entry name" value="cpn10"/>
    <property type="match status" value="1"/>
</dbReference>
<dbReference type="FunFam" id="2.30.33.40:FF:000009">
    <property type="entry name" value="10 kDa chaperonin"/>
    <property type="match status" value="1"/>
</dbReference>
<dbReference type="Gene3D" id="2.30.33.40">
    <property type="entry name" value="GroES chaperonin"/>
    <property type="match status" value="1"/>
</dbReference>
<dbReference type="HAMAP" id="MF_00580">
    <property type="entry name" value="CH10"/>
    <property type="match status" value="1"/>
</dbReference>
<dbReference type="InterPro" id="IPR020818">
    <property type="entry name" value="Chaperonin_GroES"/>
</dbReference>
<dbReference type="InterPro" id="IPR037124">
    <property type="entry name" value="Chaperonin_GroES_sf"/>
</dbReference>
<dbReference type="InterPro" id="IPR018369">
    <property type="entry name" value="Chaprnonin_Cpn10_CS"/>
</dbReference>
<dbReference type="InterPro" id="IPR011032">
    <property type="entry name" value="GroES-like_sf"/>
</dbReference>
<dbReference type="NCBIfam" id="NF001535">
    <property type="entry name" value="PRK00364.3-1"/>
    <property type="match status" value="1"/>
</dbReference>
<dbReference type="NCBIfam" id="NF001537">
    <property type="entry name" value="PRK00364.3-3"/>
    <property type="match status" value="1"/>
</dbReference>
<dbReference type="PANTHER" id="PTHR10772">
    <property type="entry name" value="10 KDA HEAT SHOCK PROTEIN"/>
    <property type="match status" value="1"/>
</dbReference>
<dbReference type="PANTHER" id="PTHR10772:SF58">
    <property type="entry name" value="CO-CHAPERONIN GROES"/>
    <property type="match status" value="1"/>
</dbReference>
<dbReference type="Pfam" id="PF00166">
    <property type="entry name" value="Cpn10"/>
    <property type="match status" value="1"/>
</dbReference>
<dbReference type="PRINTS" id="PR00297">
    <property type="entry name" value="CHAPERONIN10"/>
</dbReference>
<dbReference type="SMART" id="SM00883">
    <property type="entry name" value="Cpn10"/>
    <property type="match status" value="1"/>
</dbReference>
<dbReference type="SUPFAM" id="SSF50129">
    <property type="entry name" value="GroES-like"/>
    <property type="match status" value="1"/>
</dbReference>
<dbReference type="PROSITE" id="PS00681">
    <property type="entry name" value="CHAPERONINS_CPN10"/>
    <property type="match status" value="1"/>
</dbReference>
<accession>B2UW13</accession>
<protein>
    <recommendedName>
        <fullName evidence="1">Co-chaperonin GroES</fullName>
    </recommendedName>
    <alternativeName>
        <fullName evidence="1">10 kDa chaperonin</fullName>
    </alternativeName>
    <alternativeName>
        <fullName evidence="1">Chaperonin-10</fullName>
        <shortName evidence="1">Cpn10</shortName>
    </alternativeName>
</protein>
<proteinExistence type="inferred from homology"/>
<organism>
    <name type="scientific">Helicobacter pylori (strain Shi470)</name>
    <dbReference type="NCBI Taxonomy" id="512562"/>
    <lineage>
        <taxon>Bacteria</taxon>
        <taxon>Pseudomonadati</taxon>
        <taxon>Campylobacterota</taxon>
        <taxon>Epsilonproteobacteria</taxon>
        <taxon>Campylobacterales</taxon>
        <taxon>Helicobacteraceae</taxon>
        <taxon>Helicobacter</taxon>
    </lineage>
</organism>
<sequence>MKFQPLGERVLVERLEEENKTSSGIIIPDNAKEKPLMGVVKVVSHKISEGCKCVKEGDVIAFGKYKGAEIVLDGVEYMVLELEDILGIVSSGSCCHTNSHDHKHAKEHEACCHDHKKH</sequence>
<evidence type="ECO:0000255" key="1">
    <source>
        <dbReference type="HAMAP-Rule" id="MF_00580"/>
    </source>
</evidence>